<reference key="1">
    <citation type="journal article" date="2008" name="BMC Genomics">
        <title>Acidithiobacillus ferrooxidans metabolism: from genome sequence to industrial applications.</title>
        <authorList>
            <person name="Valdes J."/>
            <person name="Pedroso I."/>
            <person name="Quatrini R."/>
            <person name="Dodson R.J."/>
            <person name="Tettelin H."/>
            <person name="Blake R. II"/>
            <person name="Eisen J.A."/>
            <person name="Holmes D.S."/>
        </authorList>
    </citation>
    <scope>NUCLEOTIDE SEQUENCE [LARGE SCALE GENOMIC DNA]</scope>
    <source>
        <strain>ATCC 23270 / DSM 14882 / CIP 104768 / NCIMB 8455</strain>
    </source>
</reference>
<name>RNH_ACIF2</name>
<comment type="function">
    <text evidence="1">Endonuclease that specifically degrades the RNA of RNA-DNA hybrids.</text>
</comment>
<comment type="catalytic activity">
    <reaction evidence="1">
        <text>Endonucleolytic cleavage to 5'-phosphomonoester.</text>
        <dbReference type="EC" id="3.1.26.4"/>
    </reaction>
</comment>
<comment type="cofactor">
    <cofactor evidence="1">
        <name>Mg(2+)</name>
        <dbReference type="ChEBI" id="CHEBI:18420"/>
    </cofactor>
    <text evidence="1">Binds 1 Mg(2+) ion per subunit. May bind a second metal ion at a regulatory site, or after substrate binding.</text>
</comment>
<comment type="subunit">
    <text evidence="1">Monomer.</text>
</comment>
<comment type="subcellular location">
    <subcellularLocation>
        <location evidence="1">Cytoplasm</location>
    </subcellularLocation>
</comment>
<comment type="similarity">
    <text evidence="1">Belongs to the RNase H family.</text>
</comment>
<gene>
    <name evidence="1" type="primary">rnhA</name>
    <name type="ordered locus">AFE_0399</name>
</gene>
<keyword id="KW-0963">Cytoplasm</keyword>
<keyword id="KW-0255">Endonuclease</keyword>
<keyword id="KW-0378">Hydrolase</keyword>
<keyword id="KW-0460">Magnesium</keyword>
<keyword id="KW-0479">Metal-binding</keyword>
<keyword id="KW-0540">Nuclease</keyword>
<keyword id="KW-1185">Reference proteome</keyword>
<accession>B7J4E2</accession>
<feature type="chain" id="PRO_1000117313" description="Ribonuclease H">
    <location>
        <begin position="1"/>
        <end position="158"/>
    </location>
</feature>
<feature type="domain" description="RNase H type-1" evidence="2">
    <location>
        <begin position="2"/>
        <end position="143"/>
    </location>
</feature>
<feature type="binding site" evidence="1">
    <location>
        <position position="11"/>
    </location>
    <ligand>
        <name>Mg(2+)</name>
        <dbReference type="ChEBI" id="CHEBI:18420"/>
        <label>1</label>
    </ligand>
</feature>
<feature type="binding site" evidence="1">
    <location>
        <position position="11"/>
    </location>
    <ligand>
        <name>Mg(2+)</name>
        <dbReference type="ChEBI" id="CHEBI:18420"/>
        <label>2</label>
    </ligand>
</feature>
<feature type="binding site" evidence="1">
    <location>
        <position position="49"/>
    </location>
    <ligand>
        <name>Mg(2+)</name>
        <dbReference type="ChEBI" id="CHEBI:18420"/>
        <label>1</label>
    </ligand>
</feature>
<feature type="binding site" evidence="1">
    <location>
        <position position="71"/>
    </location>
    <ligand>
        <name>Mg(2+)</name>
        <dbReference type="ChEBI" id="CHEBI:18420"/>
        <label>1</label>
    </ligand>
</feature>
<feature type="binding site" evidence="1">
    <location>
        <position position="135"/>
    </location>
    <ligand>
        <name>Mg(2+)</name>
        <dbReference type="ChEBI" id="CHEBI:18420"/>
        <label>2</label>
    </ligand>
</feature>
<dbReference type="EC" id="3.1.26.4" evidence="1"/>
<dbReference type="EMBL" id="CP001219">
    <property type="protein sequence ID" value="ACK80337.1"/>
    <property type="molecule type" value="Genomic_DNA"/>
</dbReference>
<dbReference type="RefSeq" id="WP_009567346.1">
    <property type="nucleotide sequence ID" value="NC_011761.1"/>
</dbReference>
<dbReference type="SMR" id="B7J4E2"/>
<dbReference type="STRING" id="243159.AFE_0399"/>
<dbReference type="PaxDb" id="243159-AFE_0399"/>
<dbReference type="GeneID" id="65279775"/>
<dbReference type="KEGG" id="afr:AFE_0399"/>
<dbReference type="eggNOG" id="COG0328">
    <property type="taxonomic scope" value="Bacteria"/>
</dbReference>
<dbReference type="HOGENOM" id="CLU_030894_6_0_6"/>
<dbReference type="Proteomes" id="UP000001362">
    <property type="component" value="Chromosome"/>
</dbReference>
<dbReference type="GO" id="GO:0005737">
    <property type="term" value="C:cytoplasm"/>
    <property type="evidence" value="ECO:0007669"/>
    <property type="project" value="UniProtKB-SubCell"/>
</dbReference>
<dbReference type="GO" id="GO:0000287">
    <property type="term" value="F:magnesium ion binding"/>
    <property type="evidence" value="ECO:0007669"/>
    <property type="project" value="UniProtKB-UniRule"/>
</dbReference>
<dbReference type="GO" id="GO:0003676">
    <property type="term" value="F:nucleic acid binding"/>
    <property type="evidence" value="ECO:0007669"/>
    <property type="project" value="InterPro"/>
</dbReference>
<dbReference type="GO" id="GO:0004523">
    <property type="term" value="F:RNA-DNA hybrid ribonuclease activity"/>
    <property type="evidence" value="ECO:0007669"/>
    <property type="project" value="UniProtKB-UniRule"/>
</dbReference>
<dbReference type="GO" id="GO:0043137">
    <property type="term" value="P:DNA replication, removal of RNA primer"/>
    <property type="evidence" value="ECO:0007669"/>
    <property type="project" value="TreeGrafter"/>
</dbReference>
<dbReference type="CDD" id="cd09278">
    <property type="entry name" value="RNase_HI_prokaryote_like"/>
    <property type="match status" value="1"/>
</dbReference>
<dbReference type="Gene3D" id="3.30.420.10">
    <property type="entry name" value="Ribonuclease H-like superfamily/Ribonuclease H"/>
    <property type="match status" value="1"/>
</dbReference>
<dbReference type="HAMAP" id="MF_00042">
    <property type="entry name" value="RNase_H"/>
    <property type="match status" value="1"/>
</dbReference>
<dbReference type="InterPro" id="IPR050092">
    <property type="entry name" value="RNase_H"/>
</dbReference>
<dbReference type="InterPro" id="IPR012337">
    <property type="entry name" value="RNaseH-like_sf"/>
</dbReference>
<dbReference type="InterPro" id="IPR002156">
    <property type="entry name" value="RNaseH_domain"/>
</dbReference>
<dbReference type="InterPro" id="IPR036397">
    <property type="entry name" value="RNaseH_sf"/>
</dbReference>
<dbReference type="InterPro" id="IPR022892">
    <property type="entry name" value="RNaseHI"/>
</dbReference>
<dbReference type="NCBIfam" id="NF001236">
    <property type="entry name" value="PRK00203.1"/>
    <property type="match status" value="1"/>
</dbReference>
<dbReference type="PANTHER" id="PTHR10642">
    <property type="entry name" value="RIBONUCLEASE H1"/>
    <property type="match status" value="1"/>
</dbReference>
<dbReference type="PANTHER" id="PTHR10642:SF26">
    <property type="entry name" value="RIBONUCLEASE H1"/>
    <property type="match status" value="1"/>
</dbReference>
<dbReference type="Pfam" id="PF00075">
    <property type="entry name" value="RNase_H"/>
    <property type="match status" value="1"/>
</dbReference>
<dbReference type="SUPFAM" id="SSF53098">
    <property type="entry name" value="Ribonuclease H-like"/>
    <property type="match status" value="1"/>
</dbReference>
<dbReference type="PROSITE" id="PS50879">
    <property type="entry name" value="RNASE_H_1"/>
    <property type="match status" value="1"/>
</dbReference>
<protein>
    <recommendedName>
        <fullName evidence="1">Ribonuclease H</fullName>
        <shortName evidence="1">RNase H</shortName>
        <ecNumber evidence="1">3.1.26.4</ecNumber>
    </recommendedName>
</protein>
<organism>
    <name type="scientific">Acidithiobacillus ferrooxidans (strain ATCC 23270 / DSM 14882 / CIP 104768 / NCIMB 8455)</name>
    <name type="common">Ferrobacillus ferrooxidans (strain ATCC 23270)</name>
    <dbReference type="NCBI Taxonomy" id="243159"/>
    <lineage>
        <taxon>Bacteria</taxon>
        <taxon>Pseudomonadati</taxon>
        <taxon>Pseudomonadota</taxon>
        <taxon>Acidithiobacillia</taxon>
        <taxon>Acidithiobacillales</taxon>
        <taxon>Acidithiobacillaceae</taxon>
        <taxon>Acidithiobacillus</taxon>
    </lineage>
</organism>
<sequence length="158" mass="17832">MPEKIIELFTDGGCRGNPGIGAWGVWLRLAGQERVLWGFVPETTNNRMELTAALRGLEALKRPSAVRVISDSRYLRDGMTQWLAGWQRRGWRTAGGDAVKNRDIWELLAAVAARHQVQWEWVRGHSGHIENERVDALLNRVMDQYAAGGQAREGEGWL</sequence>
<evidence type="ECO:0000255" key="1">
    <source>
        <dbReference type="HAMAP-Rule" id="MF_00042"/>
    </source>
</evidence>
<evidence type="ECO:0000255" key="2">
    <source>
        <dbReference type="PROSITE-ProRule" id="PRU00408"/>
    </source>
</evidence>
<proteinExistence type="inferred from homology"/>